<protein>
    <recommendedName>
        <fullName evidence="1">UPF0250 protein YbeD</fullName>
    </recommendedName>
</protein>
<gene>
    <name evidence="1" type="primary">ybeD</name>
    <name type="ordered locus">ECIAI1_0614</name>
</gene>
<sequence length="87" mass="9827">MKTKLNELLEFPTPFTYKVMGQALPELVDQVVEVVQRHAPGDYTPTVKPSSKGNYHSVSITINATHIEQVETLYEELGKIDIVRMVL</sequence>
<feature type="chain" id="PRO_1000131242" description="UPF0250 protein YbeD">
    <location>
        <begin position="1"/>
        <end position="87"/>
    </location>
</feature>
<accession>B7M5F8</accession>
<organism>
    <name type="scientific">Escherichia coli O8 (strain IAI1)</name>
    <dbReference type="NCBI Taxonomy" id="585034"/>
    <lineage>
        <taxon>Bacteria</taxon>
        <taxon>Pseudomonadati</taxon>
        <taxon>Pseudomonadota</taxon>
        <taxon>Gammaproteobacteria</taxon>
        <taxon>Enterobacterales</taxon>
        <taxon>Enterobacteriaceae</taxon>
        <taxon>Escherichia</taxon>
    </lineage>
</organism>
<proteinExistence type="inferred from homology"/>
<comment type="similarity">
    <text evidence="1">Belongs to the UPF0250 family.</text>
</comment>
<dbReference type="EMBL" id="CU928160">
    <property type="protein sequence ID" value="CAQ97484.1"/>
    <property type="molecule type" value="Genomic_DNA"/>
</dbReference>
<dbReference type="RefSeq" id="WP_000850550.1">
    <property type="nucleotide sequence ID" value="NC_011741.1"/>
</dbReference>
<dbReference type="SMR" id="B7M5F8"/>
<dbReference type="GeneID" id="93776851"/>
<dbReference type="KEGG" id="ecr:ECIAI1_0614"/>
<dbReference type="HOGENOM" id="CLU_161438_2_1_6"/>
<dbReference type="GO" id="GO:0005829">
    <property type="term" value="C:cytosol"/>
    <property type="evidence" value="ECO:0007669"/>
    <property type="project" value="TreeGrafter"/>
</dbReference>
<dbReference type="FunFam" id="3.30.70.260:FF:000002">
    <property type="entry name" value="UPF0250 protein YbeD"/>
    <property type="match status" value="1"/>
</dbReference>
<dbReference type="Gene3D" id="3.30.70.260">
    <property type="match status" value="1"/>
</dbReference>
<dbReference type="HAMAP" id="MF_00659">
    <property type="entry name" value="UPF0250"/>
    <property type="match status" value="1"/>
</dbReference>
<dbReference type="InterPro" id="IPR007454">
    <property type="entry name" value="UPF0250_YbeD-like"/>
</dbReference>
<dbReference type="InterPro" id="IPR027471">
    <property type="entry name" value="YbeD-like_sf"/>
</dbReference>
<dbReference type="NCBIfam" id="NF003447">
    <property type="entry name" value="PRK04998.1"/>
    <property type="match status" value="1"/>
</dbReference>
<dbReference type="PANTHER" id="PTHR38036">
    <property type="entry name" value="UPF0250 PROTEIN YBED"/>
    <property type="match status" value="1"/>
</dbReference>
<dbReference type="PANTHER" id="PTHR38036:SF1">
    <property type="entry name" value="UPF0250 PROTEIN YBED"/>
    <property type="match status" value="1"/>
</dbReference>
<dbReference type="Pfam" id="PF04359">
    <property type="entry name" value="DUF493"/>
    <property type="match status" value="1"/>
</dbReference>
<dbReference type="SUPFAM" id="SSF117991">
    <property type="entry name" value="YbeD/HP0495-like"/>
    <property type="match status" value="1"/>
</dbReference>
<name>YBED_ECO8A</name>
<reference key="1">
    <citation type="journal article" date="2009" name="PLoS Genet.">
        <title>Organised genome dynamics in the Escherichia coli species results in highly diverse adaptive paths.</title>
        <authorList>
            <person name="Touchon M."/>
            <person name="Hoede C."/>
            <person name="Tenaillon O."/>
            <person name="Barbe V."/>
            <person name="Baeriswyl S."/>
            <person name="Bidet P."/>
            <person name="Bingen E."/>
            <person name="Bonacorsi S."/>
            <person name="Bouchier C."/>
            <person name="Bouvet O."/>
            <person name="Calteau A."/>
            <person name="Chiapello H."/>
            <person name="Clermont O."/>
            <person name="Cruveiller S."/>
            <person name="Danchin A."/>
            <person name="Diard M."/>
            <person name="Dossat C."/>
            <person name="Karoui M.E."/>
            <person name="Frapy E."/>
            <person name="Garry L."/>
            <person name="Ghigo J.M."/>
            <person name="Gilles A.M."/>
            <person name="Johnson J."/>
            <person name="Le Bouguenec C."/>
            <person name="Lescat M."/>
            <person name="Mangenot S."/>
            <person name="Martinez-Jehanne V."/>
            <person name="Matic I."/>
            <person name="Nassif X."/>
            <person name="Oztas S."/>
            <person name="Petit M.A."/>
            <person name="Pichon C."/>
            <person name="Rouy Z."/>
            <person name="Ruf C.S."/>
            <person name="Schneider D."/>
            <person name="Tourret J."/>
            <person name="Vacherie B."/>
            <person name="Vallenet D."/>
            <person name="Medigue C."/>
            <person name="Rocha E.P.C."/>
            <person name="Denamur E."/>
        </authorList>
    </citation>
    <scope>NUCLEOTIDE SEQUENCE [LARGE SCALE GENOMIC DNA]</scope>
    <source>
        <strain>IAI1</strain>
    </source>
</reference>
<evidence type="ECO:0000255" key="1">
    <source>
        <dbReference type="HAMAP-Rule" id="MF_00659"/>
    </source>
</evidence>